<comment type="function">
    <text evidence="1">Allows the formation of correctly charged Gln-tRNA(Gln) through the transamidation of misacylated Glu-tRNA(Gln) in organisms which lack glutaminyl-tRNA synthetase. The reaction takes place in the presence of glutamine and ATP through an activated gamma-phospho-Glu-tRNA(Gln).</text>
</comment>
<comment type="catalytic activity">
    <reaction evidence="1">
        <text>L-glutamyl-tRNA(Gln) + L-glutamine + ATP + H2O = L-glutaminyl-tRNA(Gln) + L-glutamate + ADP + phosphate + H(+)</text>
        <dbReference type="Rhea" id="RHEA:17521"/>
        <dbReference type="Rhea" id="RHEA-COMP:9681"/>
        <dbReference type="Rhea" id="RHEA-COMP:9684"/>
        <dbReference type="ChEBI" id="CHEBI:15377"/>
        <dbReference type="ChEBI" id="CHEBI:15378"/>
        <dbReference type="ChEBI" id="CHEBI:29985"/>
        <dbReference type="ChEBI" id="CHEBI:30616"/>
        <dbReference type="ChEBI" id="CHEBI:43474"/>
        <dbReference type="ChEBI" id="CHEBI:58359"/>
        <dbReference type="ChEBI" id="CHEBI:78520"/>
        <dbReference type="ChEBI" id="CHEBI:78521"/>
        <dbReference type="ChEBI" id="CHEBI:456216"/>
        <dbReference type="EC" id="6.3.5.7"/>
    </reaction>
</comment>
<comment type="subunit">
    <text evidence="1">Heterotrimer of A, B and C subunits.</text>
</comment>
<comment type="similarity">
    <text evidence="1">Belongs to the amidase family. GatA subfamily.</text>
</comment>
<reference key="1">
    <citation type="journal article" date="2009" name="Proc. Natl. Acad. Sci. U.S.A.">
        <title>The genomic basis of trophic strategy in marine bacteria.</title>
        <authorList>
            <person name="Lauro F.M."/>
            <person name="McDougald D."/>
            <person name="Thomas T."/>
            <person name="Williams T.J."/>
            <person name="Egan S."/>
            <person name="Rice S."/>
            <person name="DeMaere M.Z."/>
            <person name="Ting L."/>
            <person name="Ertan H."/>
            <person name="Johnson J."/>
            <person name="Ferriera S."/>
            <person name="Lapidus A."/>
            <person name="Anderson I."/>
            <person name="Kyrpides N."/>
            <person name="Munk A.C."/>
            <person name="Detter C."/>
            <person name="Han C.S."/>
            <person name="Brown M.V."/>
            <person name="Robb F.T."/>
            <person name="Kjelleberg S."/>
            <person name="Cavicchioli R."/>
        </authorList>
    </citation>
    <scope>NUCLEOTIDE SEQUENCE [LARGE SCALE GENOMIC DNA]</scope>
    <source>
        <strain>DSM 13593 / LMG 18877 / RB2256</strain>
    </source>
</reference>
<keyword id="KW-0067">ATP-binding</keyword>
<keyword id="KW-0436">Ligase</keyword>
<keyword id="KW-0547">Nucleotide-binding</keyword>
<keyword id="KW-0648">Protein biosynthesis</keyword>
<keyword id="KW-1185">Reference proteome</keyword>
<proteinExistence type="inferred from homology"/>
<organism>
    <name type="scientific">Sphingopyxis alaskensis (strain DSM 13593 / LMG 18877 / RB2256)</name>
    <name type="common">Sphingomonas alaskensis</name>
    <dbReference type="NCBI Taxonomy" id="317655"/>
    <lineage>
        <taxon>Bacteria</taxon>
        <taxon>Pseudomonadati</taxon>
        <taxon>Pseudomonadota</taxon>
        <taxon>Alphaproteobacteria</taxon>
        <taxon>Sphingomonadales</taxon>
        <taxon>Sphingomonadaceae</taxon>
        <taxon>Sphingopyxis</taxon>
    </lineage>
</organism>
<gene>
    <name evidence="1" type="primary">gatA</name>
    <name type="ordered locus">Sala_0841</name>
</gene>
<sequence length="493" mass="51841">MTELTNLTVAQIRDGHRAGDFSAVEVAEAFNANVAAAKALNAFIVETPDLAIEAAKAADADRAAGTLKPLSGVPIGMKDLFCTNGVQTTAASHMLEGFVPRYESTVSQKLWDAGAGMLGKLNLDQFAMGSSNETSYFGNVISPWRRNDGGNAALAPGGSSGGSSAAIAARLCPAATGTDTGGSIRQPAAFTGISGIKPTYGRCSRWGIVAFASSLDQAGPMARTVRDCAIMLENMAGFDPKDATSLDLPVPNWEAALSSDLRGKTVGIPREYRLEGIDPDIDAMWDAGIAMLKDAEAAVVEISLPHTKYALPAYYIIAPAEASSNLARYDGVRYGLRDLPQGAGLQDMYAATRAEGFGAEVKRRIMIGTYVLSAGFYDAYYTQAQKVRTLIARDFEAAFGSCDVILAPTAPSAAFGLGEKMADPLAMYLNDVFAVPASLAGLPAMSVPAALNREGLPLGLQIIGKPFDEQGVLNAGLAIEERAGFTARAEKWW</sequence>
<accession>Q1GUW3</accession>
<dbReference type="EC" id="6.3.5.7" evidence="1"/>
<dbReference type="EMBL" id="CP000356">
    <property type="protein sequence ID" value="ABF52559.1"/>
    <property type="molecule type" value="Genomic_DNA"/>
</dbReference>
<dbReference type="RefSeq" id="WP_011541149.1">
    <property type="nucleotide sequence ID" value="NC_008048.1"/>
</dbReference>
<dbReference type="SMR" id="Q1GUW3"/>
<dbReference type="STRING" id="317655.Sala_0841"/>
<dbReference type="KEGG" id="sal:Sala_0841"/>
<dbReference type="eggNOG" id="COG0154">
    <property type="taxonomic scope" value="Bacteria"/>
</dbReference>
<dbReference type="HOGENOM" id="CLU_009600_0_3_5"/>
<dbReference type="OrthoDB" id="9811471at2"/>
<dbReference type="Proteomes" id="UP000006578">
    <property type="component" value="Chromosome"/>
</dbReference>
<dbReference type="GO" id="GO:0030956">
    <property type="term" value="C:glutamyl-tRNA(Gln) amidotransferase complex"/>
    <property type="evidence" value="ECO:0007669"/>
    <property type="project" value="InterPro"/>
</dbReference>
<dbReference type="GO" id="GO:0005524">
    <property type="term" value="F:ATP binding"/>
    <property type="evidence" value="ECO:0007669"/>
    <property type="project" value="UniProtKB-KW"/>
</dbReference>
<dbReference type="GO" id="GO:0050567">
    <property type="term" value="F:glutaminyl-tRNA synthase (glutamine-hydrolyzing) activity"/>
    <property type="evidence" value="ECO:0007669"/>
    <property type="project" value="UniProtKB-UniRule"/>
</dbReference>
<dbReference type="GO" id="GO:0006412">
    <property type="term" value="P:translation"/>
    <property type="evidence" value="ECO:0007669"/>
    <property type="project" value="UniProtKB-UniRule"/>
</dbReference>
<dbReference type="Gene3D" id="3.90.1300.10">
    <property type="entry name" value="Amidase signature (AS) domain"/>
    <property type="match status" value="1"/>
</dbReference>
<dbReference type="HAMAP" id="MF_00120">
    <property type="entry name" value="GatA"/>
    <property type="match status" value="1"/>
</dbReference>
<dbReference type="InterPro" id="IPR000120">
    <property type="entry name" value="Amidase"/>
</dbReference>
<dbReference type="InterPro" id="IPR020556">
    <property type="entry name" value="Amidase_CS"/>
</dbReference>
<dbReference type="InterPro" id="IPR023631">
    <property type="entry name" value="Amidase_dom"/>
</dbReference>
<dbReference type="InterPro" id="IPR036928">
    <property type="entry name" value="AS_sf"/>
</dbReference>
<dbReference type="InterPro" id="IPR004412">
    <property type="entry name" value="GatA"/>
</dbReference>
<dbReference type="NCBIfam" id="TIGR00132">
    <property type="entry name" value="gatA"/>
    <property type="match status" value="1"/>
</dbReference>
<dbReference type="PANTHER" id="PTHR11895:SF151">
    <property type="entry name" value="GLUTAMYL-TRNA(GLN) AMIDOTRANSFERASE SUBUNIT A"/>
    <property type="match status" value="1"/>
</dbReference>
<dbReference type="PANTHER" id="PTHR11895">
    <property type="entry name" value="TRANSAMIDASE"/>
    <property type="match status" value="1"/>
</dbReference>
<dbReference type="Pfam" id="PF01425">
    <property type="entry name" value="Amidase"/>
    <property type="match status" value="1"/>
</dbReference>
<dbReference type="SUPFAM" id="SSF75304">
    <property type="entry name" value="Amidase signature (AS) enzymes"/>
    <property type="match status" value="1"/>
</dbReference>
<dbReference type="PROSITE" id="PS00571">
    <property type="entry name" value="AMIDASES"/>
    <property type="match status" value="1"/>
</dbReference>
<evidence type="ECO:0000255" key="1">
    <source>
        <dbReference type="HAMAP-Rule" id="MF_00120"/>
    </source>
</evidence>
<protein>
    <recommendedName>
        <fullName evidence="1">Glutamyl-tRNA(Gln) amidotransferase subunit A</fullName>
        <shortName evidence="1">Glu-ADT subunit A</shortName>
        <ecNumber evidence="1">6.3.5.7</ecNumber>
    </recommendedName>
</protein>
<feature type="chain" id="PRO_1000015906" description="Glutamyl-tRNA(Gln) amidotransferase subunit A">
    <location>
        <begin position="1"/>
        <end position="493"/>
    </location>
</feature>
<feature type="active site" description="Charge relay system" evidence="1">
    <location>
        <position position="78"/>
    </location>
</feature>
<feature type="active site" description="Charge relay system" evidence="1">
    <location>
        <position position="159"/>
    </location>
</feature>
<feature type="active site" description="Acyl-ester intermediate" evidence="1">
    <location>
        <position position="183"/>
    </location>
</feature>
<name>GATA_SPHAL</name>